<accession>Q4ZMQ7</accession>
<comment type="function">
    <text evidence="1">Binds 16S rRNA, required for the assembly of 30S particles and may also be responsible for determining the conformation of the 16S rRNA at the A site.</text>
</comment>
<comment type="subunit">
    <text evidence="1">Part of the 30S ribosomal subunit. Contacts proteins S3 and S10.</text>
</comment>
<comment type="similarity">
    <text evidence="1">Belongs to the universal ribosomal protein uS14 family.</text>
</comment>
<organism>
    <name type="scientific">Pseudomonas syringae pv. syringae (strain B728a)</name>
    <dbReference type="NCBI Taxonomy" id="205918"/>
    <lineage>
        <taxon>Bacteria</taxon>
        <taxon>Pseudomonadati</taxon>
        <taxon>Pseudomonadota</taxon>
        <taxon>Gammaproteobacteria</taxon>
        <taxon>Pseudomonadales</taxon>
        <taxon>Pseudomonadaceae</taxon>
        <taxon>Pseudomonas</taxon>
        <taxon>Pseudomonas syringae</taxon>
    </lineage>
</organism>
<proteinExistence type="inferred from homology"/>
<feature type="chain" id="PRO_1000128522" description="Small ribosomal subunit protein uS14">
    <location>
        <begin position="1"/>
        <end position="101"/>
    </location>
</feature>
<reference key="1">
    <citation type="journal article" date="2005" name="Proc. Natl. Acad. Sci. U.S.A.">
        <title>Comparison of the complete genome sequences of Pseudomonas syringae pv. syringae B728a and pv. tomato DC3000.</title>
        <authorList>
            <person name="Feil H."/>
            <person name="Feil W.S."/>
            <person name="Chain P."/>
            <person name="Larimer F."/>
            <person name="Dibartolo G."/>
            <person name="Copeland A."/>
            <person name="Lykidis A."/>
            <person name="Trong S."/>
            <person name="Nolan M."/>
            <person name="Goltsman E."/>
            <person name="Thiel J."/>
            <person name="Malfatti S."/>
            <person name="Loper J.E."/>
            <person name="Lapidus A."/>
            <person name="Detter J.C."/>
            <person name="Land M."/>
            <person name="Richardson P.M."/>
            <person name="Kyrpides N.C."/>
            <person name="Ivanova N."/>
            <person name="Lindow S.E."/>
        </authorList>
    </citation>
    <scope>NUCLEOTIDE SEQUENCE [LARGE SCALE GENOMIC DNA]</scope>
    <source>
        <strain>B728a</strain>
    </source>
</reference>
<evidence type="ECO:0000255" key="1">
    <source>
        <dbReference type="HAMAP-Rule" id="MF_00537"/>
    </source>
</evidence>
<evidence type="ECO:0000305" key="2"/>
<name>RS14_PSEU2</name>
<dbReference type="EMBL" id="CP000075">
    <property type="protein sequence ID" value="AAY39565.1"/>
    <property type="molecule type" value="Genomic_DNA"/>
</dbReference>
<dbReference type="RefSeq" id="WP_003400428.1">
    <property type="nucleotide sequence ID" value="NC_007005.1"/>
</dbReference>
<dbReference type="RefSeq" id="YP_237603.1">
    <property type="nucleotide sequence ID" value="NC_007005.1"/>
</dbReference>
<dbReference type="SMR" id="Q4ZMQ7"/>
<dbReference type="STRING" id="205918.Psyr_4535"/>
<dbReference type="GeneID" id="64463649"/>
<dbReference type="KEGG" id="psb:Psyr_4535"/>
<dbReference type="PATRIC" id="fig|205918.7.peg.4674"/>
<dbReference type="eggNOG" id="COG0199">
    <property type="taxonomic scope" value="Bacteria"/>
</dbReference>
<dbReference type="HOGENOM" id="CLU_139869_0_1_6"/>
<dbReference type="OrthoDB" id="9810484at2"/>
<dbReference type="Proteomes" id="UP000000426">
    <property type="component" value="Chromosome"/>
</dbReference>
<dbReference type="GO" id="GO:0005737">
    <property type="term" value="C:cytoplasm"/>
    <property type="evidence" value="ECO:0007669"/>
    <property type="project" value="UniProtKB-ARBA"/>
</dbReference>
<dbReference type="GO" id="GO:0015935">
    <property type="term" value="C:small ribosomal subunit"/>
    <property type="evidence" value="ECO:0007669"/>
    <property type="project" value="TreeGrafter"/>
</dbReference>
<dbReference type="GO" id="GO:0019843">
    <property type="term" value="F:rRNA binding"/>
    <property type="evidence" value="ECO:0007669"/>
    <property type="project" value="UniProtKB-UniRule"/>
</dbReference>
<dbReference type="GO" id="GO:0003735">
    <property type="term" value="F:structural constituent of ribosome"/>
    <property type="evidence" value="ECO:0007669"/>
    <property type="project" value="InterPro"/>
</dbReference>
<dbReference type="GO" id="GO:0006412">
    <property type="term" value="P:translation"/>
    <property type="evidence" value="ECO:0007669"/>
    <property type="project" value="UniProtKB-UniRule"/>
</dbReference>
<dbReference type="FunFam" id="1.10.287.1480:FF:000001">
    <property type="entry name" value="30S ribosomal protein S14"/>
    <property type="match status" value="1"/>
</dbReference>
<dbReference type="Gene3D" id="1.10.287.1480">
    <property type="match status" value="1"/>
</dbReference>
<dbReference type="HAMAP" id="MF_00537">
    <property type="entry name" value="Ribosomal_uS14_1"/>
    <property type="match status" value="1"/>
</dbReference>
<dbReference type="InterPro" id="IPR001209">
    <property type="entry name" value="Ribosomal_uS14"/>
</dbReference>
<dbReference type="InterPro" id="IPR023036">
    <property type="entry name" value="Ribosomal_uS14_bac/plastid"/>
</dbReference>
<dbReference type="NCBIfam" id="NF006477">
    <property type="entry name" value="PRK08881.1"/>
    <property type="match status" value="1"/>
</dbReference>
<dbReference type="PANTHER" id="PTHR19836">
    <property type="entry name" value="30S RIBOSOMAL PROTEIN S14"/>
    <property type="match status" value="1"/>
</dbReference>
<dbReference type="PANTHER" id="PTHR19836:SF19">
    <property type="entry name" value="SMALL RIBOSOMAL SUBUNIT PROTEIN US14M"/>
    <property type="match status" value="1"/>
</dbReference>
<dbReference type="Pfam" id="PF00253">
    <property type="entry name" value="Ribosomal_S14"/>
    <property type="match status" value="1"/>
</dbReference>
<dbReference type="SUPFAM" id="SSF57716">
    <property type="entry name" value="Glucocorticoid receptor-like (DNA-binding domain)"/>
    <property type="match status" value="1"/>
</dbReference>
<protein>
    <recommendedName>
        <fullName evidence="1">Small ribosomal subunit protein uS14</fullName>
    </recommendedName>
    <alternativeName>
        <fullName evidence="2">30S ribosomal protein S14</fullName>
    </alternativeName>
</protein>
<gene>
    <name evidence="1" type="primary">rpsN</name>
    <name type="ordered locus">Psyr_4535</name>
</gene>
<keyword id="KW-0687">Ribonucleoprotein</keyword>
<keyword id="KW-0689">Ribosomal protein</keyword>
<keyword id="KW-0694">RNA-binding</keyword>
<keyword id="KW-0699">rRNA-binding</keyword>
<sequence length="101" mass="11477">MAKMSMKNRELKRQLTVAKYAKKRAELKAIIVDLNASPEARWEATVALQKQPRDASAARMRNRCRITGRPHGVYRKFGLGRNKLREAAMRGDVPGLVKASW</sequence>